<sequence>MMLHIPEVLTPAQVSEIRQRLDAADWVDGKATVGAQGAQVKKNRQLPELSPVGMELGQIILKALVNNPLFFAAALPMRYMPPLFNRYEGGEHYGFHIDGSVRNIPGSNLSLRTDLSCTLFLCEPEDYDGGELIVADTYGEHEVKLPAGDMILYPSSSLHKVEPVTRGARVCSFFWLQSMVADDAKRSLLFELDQNIQKLRAKLGDCEEVVGLTGHYHNLLRQWAAV</sequence>
<gene>
    <name type="ordered locus">mma_3620</name>
</gene>
<organism>
    <name type="scientific">Janthinobacterium sp. (strain Marseille)</name>
    <name type="common">Minibacterium massiliensis</name>
    <dbReference type="NCBI Taxonomy" id="375286"/>
    <lineage>
        <taxon>Bacteria</taxon>
        <taxon>Pseudomonadati</taxon>
        <taxon>Pseudomonadota</taxon>
        <taxon>Betaproteobacteria</taxon>
        <taxon>Burkholderiales</taxon>
        <taxon>Oxalobacteraceae</taxon>
        <taxon>Janthinobacterium</taxon>
    </lineage>
</organism>
<name>Y3620_JANMA</name>
<accession>A6T463</accession>
<reference key="1">
    <citation type="journal article" date="2007" name="PLoS Genet.">
        <title>Genome analysis of Minibacterium massiliensis highlights the convergent evolution of water-living bacteria.</title>
        <authorList>
            <person name="Audic S."/>
            <person name="Robert C."/>
            <person name="Campagna B."/>
            <person name="Parinello H."/>
            <person name="Claverie J.-M."/>
            <person name="Raoult D."/>
            <person name="Drancourt M."/>
        </authorList>
    </citation>
    <scope>NUCLEOTIDE SEQUENCE [LARGE SCALE GENOMIC DNA]</scope>
    <source>
        <strain>Marseille</strain>
    </source>
</reference>
<evidence type="ECO:0000255" key="1">
    <source>
        <dbReference type="HAMAP-Rule" id="MF_00657"/>
    </source>
</evidence>
<protein>
    <recommendedName>
        <fullName evidence="1">PKHD-type hydroxylase mma_3620</fullName>
        <ecNumber evidence="1">1.14.11.-</ecNumber>
    </recommendedName>
</protein>
<comment type="cofactor">
    <cofactor evidence="1">
        <name>Fe(2+)</name>
        <dbReference type="ChEBI" id="CHEBI:29033"/>
    </cofactor>
    <text evidence="1">Binds 1 Fe(2+) ion per subunit.</text>
</comment>
<comment type="cofactor">
    <cofactor evidence="1">
        <name>L-ascorbate</name>
        <dbReference type="ChEBI" id="CHEBI:38290"/>
    </cofactor>
</comment>
<feature type="chain" id="PRO_0000346486" description="PKHD-type hydroxylase mma_3620">
    <location>
        <begin position="1"/>
        <end position="226"/>
    </location>
</feature>
<feature type="domain" description="Fe2OG dioxygenase" evidence="1">
    <location>
        <begin position="78"/>
        <end position="178"/>
    </location>
</feature>
<feature type="binding site" evidence="1">
    <location>
        <position position="96"/>
    </location>
    <ligand>
        <name>Fe cation</name>
        <dbReference type="ChEBI" id="CHEBI:24875"/>
    </ligand>
</feature>
<feature type="binding site" evidence="1">
    <location>
        <position position="98"/>
    </location>
    <ligand>
        <name>Fe cation</name>
        <dbReference type="ChEBI" id="CHEBI:24875"/>
    </ligand>
</feature>
<feature type="binding site" evidence="1">
    <location>
        <position position="159"/>
    </location>
    <ligand>
        <name>Fe cation</name>
        <dbReference type="ChEBI" id="CHEBI:24875"/>
    </ligand>
</feature>
<feature type="binding site" evidence="1">
    <location>
        <position position="169"/>
    </location>
    <ligand>
        <name>2-oxoglutarate</name>
        <dbReference type="ChEBI" id="CHEBI:16810"/>
    </ligand>
</feature>
<dbReference type="EC" id="1.14.11.-" evidence="1"/>
<dbReference type="EMBL" id="CP000269">
    <property type="protein sequence ID" value="ABR88358.1"/>
    <property type="molecule type" value="Genomic_DNA"/>
</dbReference>
<dbReference type="RefSeq" id="WP_012081456.1">
    <property type="nucleotide sequence ID" value="NC_009659.1"/>
</dbReference>
<dbReference type="SMR" id="A6T463"/>
<dbReference type="STRING" id="375286.mma_3620"/>
<dbReference type="KEGG" id="mms:mma_3620"/>
<dbReference type="eggNOG" id="COG3128">
    <property type="taxonomic scope" value="Bacteria"/>
</dbReference>
<dbReference type="HOGENOM" id="CLU_106663_0_0_4"/>
<dbReference type="OrthoDB" id="9812472at2"/>
<dbReference type="Proteomes" id="UP000006388">
    <property type="component" value="Chromosome"/>
</dbReference>
<dbReference type="GO" id="GO:0016706">
    <property type="term" value="F:2-oxoglutarate-dependent dioxygenase activity"/>
    <property type="evidence" value="ECO:0007669"/>
    <property type="project" value="UniProtKB-UniRule"/>
</dbReference>
<dbReference type="GO" id="GO:0005506">
    <property type="term" value="F:iron ion binding"/>
    <property type="evidence" value="ECO:0007669"/>
    <property type="project" value="UniProtKB-UniRule"/>
</dbReference>
<dbReference type="GO" id="GO:0031418">
    <property type="term" value="F:L-ascorbic acid binding"/>
    <property type="evidence" value="ECO:0007669"/>
    <property type="project" value="UniProtKB-KW"/>
</dbReference>
<dbReference type="GO" id="GO:0006974">
    <property type="term" value="P:DNA damage response"/>
    <property type="evidence" value="ECO:0007669"/>
    <property type="project" value="TreeGrafter"/>
</dbReference>
<dbReference type="GO" id="GO:0006879">
    <property type="term" value="P:intracellular iron ion homeostasis"/>
    <property type="evidence" value="ECO:0007669"/>
    <property type="project" value="TreeGrafter"/>
</dbReference>
<dbReference type="Gene3D" id="2.60.120.620">
    <property type="entry name" value="q2cbj1_9rhob like domain"/>
    <property type="match status" value="1"/>
</dbReference>
<dbReference type="Gene3D" id="4.10.860.20">
    <property type="entry name" value="Rabenosyn, Rab binding domain"/>
    <property type="match status" value="1"/>
</dbReference>
<dbReference type="HAMAP" id="MF_00657">
    <property type="entry name" value="Hydroxyl_YbiX"/>
    <property type="match status" value="1"/>
</dbReference>
<dbReference type="InterPro" id="IPR005123">
    <property type="entry name" value="Oxoglu/Fe-dep_dioxygenase_dom"/>
</dbReference>
<dbReference type="InterPro" id="IPR041097">
    <property type="entry name" value="PKHD_C"/>
</dbReference>
<dbReference type="InterPro" id="IPR023550">
    <property type="entry name" value="PKHD_hydroxylase"/>
</dbReference>
<dbReference type="InterPro" id="IPR006620">
    <property type="entry name" value="Pro_4_hyd_alph"/>
</dbReference>
<dbReference type="InterPro" id="IPR044862">
    <property type="entry name" value="Pro_4_hyd_alph_FE2OG_OXY"/>
</dbReference>
<dbReference type="NCBIfam" id="NF003973">
    <property type="entry name" value="PRK05467.1-2"/>
    <property type="match status" value="1"/>
</dbReference>
<dbReference type="NCBIfam" id="NF003974">
    <property type="entry name" value="PRK05467.1-3"/>
    <property type="match status" value="1"/>
</dbReference>
<dbReference type="NCBIfam" id="NF003975">
    <property type="entry name" value="PRK05467.1-4"/>
    <property type="match status" value="1"/>
</dbReference>
<dbReference type="PANTHER" id="PTHR41536">
    <property type="entry name" value="PKHD-TYPE HYDROXYLASE YBIX"/>
    <property type="match status" value="1"/>
</dbReference>
<dbReference type="PANTHER" id="PTHR41536:SF1">
    <property type="entry name" value="PKHD-TYPE HYDROXYLASE YBIX"/>
    <property type="match status" value="1"/>
</dbReference>
<dbReference type="Pfam" id="PF13640">
    <property type="entry name" value="2OG-FeII_Oxy_3"/>
    <property type="match status" value="1"/>
</dbReference>
<dbReference type="Pfam" id="PF18331">
    <property type="entry name" value="PKHD_C"/>
    <property type="match status" value="1"/>
</dbReference>
<dbReference type="SMART" id="SM00702">
    <property type="entry name" value="P4Hc"/>
    <property type="match status" value="1"/>
</dbReference>
<dbReference type="SUPFAM" id="SSF51197">
    <property type="entry name" value="Clavaminate synthase-like"/>
    <property type="match status" value="1"/>
</dbReference>
<dbReference type="PROSITE" id="PS51471">
    <property type="entry name" value="FE2OG_OXY"/>
    <property type="match status" value="1"/>
</dbReference>
<proteinExistence type="inferred from homology"/>
<keyword id="KW-0223">Dioxygenase</keyword>
<keyword id="KW-0408">Iron</keyword>
<keyword id="KW-0479">Metal-binding</keyword>
<keyword id="KW-0560">Oxidoreductase</keyword>
<keyword id="KW-0847">Vitamin C</keyword>